<comment type="function">
    <text evidence="1">Plays an important role in the de novo pathway of purine nucleotide biosynthesis. Catalyzes the first committed step in the biosynthesis of AMP from IMP.</text>
</comment>
<comment type="catalytic activity">
    <reaction evidence="1">
        <text>IMP + L-aspartate + GTP = N(6)-(1,2-dicarboxyethyl)-AMP + GDP + phosphate + 2 H(+)</text>
        <dbReference type="Rhea" id="RHEA:15753"/>
        <dbReference type="ChEBI" id="CHEBI:15378"/>
        <dbReference type="ChEBI" id="CHEBI:29991"/>
        <dbReference type="ChEBI" id="CHEBI:37565"/>
        <dbReference type="ChEBI" id="CHEBI:43474"/>
        <dbReference type="ChEBI" id="CHEBI:57567"/>
        <dbReference type="ChEBI" id="CHEBI:58053"/>
        <dbReference type="ChEBI" id="CHEBI:58189"/>
        <dbReference type="EC" id="6.3.4.4"/>
    </reaction>
</comment>
<comment type="cofactor">
    <cofactor evidence="1">
        <name>Mg(2+)</name>
        <dbReference type="ChEBI" id="CHEBI:18420"/>
    </cofactor>
    <text evidence="1">Binds 1 Mg(2+) ion per subunit.</text>
</comment>
<comment type="pathway">
    <text evidence="1">Purine metabolism; AMP biosynthesis via de novo pathway; AMP from IMP: step 1/2.</text>
</comment>
<comment type="subunit">
    <text evidence="1">Homodimer.</text>
</comment>
<comment type="subcellular location">
    <subcellularLocation>
        <location evidence="1">Cytoplasm</location>
    </subcellularLocation>
</comment>
<comment type="similarity">
    <text evidence="1">Belongs to the adenylosuccinate synthetase family.</text>
</comment>
<keyword id="KW-0963">Cytoplasm</keyword>
<keyword id="KW-0342">GTP-binding</keyword>
<keyword id="KW-0436">Ligase</keyword>
<keyword id="KW-0460">Magnesium</keyword>
<keyword id="KW-0479">Metal-binding</keyword>
<keyword id="KW-0547">Nucleotide-binding</keyword>
<keyword id="KW-0658">Purine biosynthesis</keyword>
<organism>
    <name type="scientific">Dechloromonas aromatica (strain RCB)</name>
    <dbReference type="NCBI Taxonomy" id="159087"/>
    <lineage>
        <taxon>Bacteria</taxon>
        <taxon>Pseudomonadati</taxon>
        <taxon>Pseudomonadota</taxon>
        <taxon>Betaproteobacteria</taxon>
        <taxon>Rhodocyclales</taxon>
        <taxon>Azonexaceae</taxon>
        <taxon>Dechloromonas</taxon>
    </lineage>
</organism>
<accession>Q47BS7</accession>
<feature type="chain" id="PRO_0000224271" description="Adenylosuccinate synthetase">
    <location>
        <begin position="1"/>
        <end position="435"/>
    </location>
</feature>
<feature type="active site" description="Proton acceptor" evidence="1">
    <location>
        <position position="14"/>
    </location>
</feature>
<feature type="active site" description="Proton donor" evidence="1">
    <location>
        <position position="42"/>
    </location>
</feature>
<feature type="binding site" evidence="1">
    <location>
        <begin position="13"/>
        <end position="19"/>
    </location>
    <ligand>
        <name>GTP</name>
        <dbReference type="ChEBI" id="CHEBI:37565"/>
    </ligand>
</feature>
<feature type="binding site" description="in other chain" evidence="1">
    <location>
        <begin position="14"/>
        <end position="17"/>
    </location>
    <ligand>
        <name>IMP</name>
        <dbReference type="ChEBI" id="CHEBI:58053"/>
        <note>ligand shared between dimeric partners</note>
    </ligand>
</feature>
<feature type="binding site" evidence="1">
    <location>
        <position position="14"/>
    </location>
    <ligand>
        <name>Mg(2+)</name>
        <dbReference type="ChEBI" id="CHEBI:18420"/>
    </ligand>
</feature>
<feature type="binding site" description="in other chain" evidence="1">
    <location>
        <begin position="39"/>
        <end position="42"/>
    </location>
    <ligand>
        <name>IMP</name>
        <dbReference type="ChEBI" id="CHEBI:58053"/>
        <note>ligand shared between dimeric partners</note>
    </ligand>
</feature>
<feature type="binding site" evidence="1">
    <location>
        <begin position="41"/>
        <end position="43"/>
    </location>
    <ligand>
        <name>GTP</name>
        <dbReference type="ChEBI" id="CHEBI:37565"/>
    </ligand>
</feature>
<feature type="binding site" evidence="1">
    <location>
        <position position="41"/>
    </location>
    <ligand>
        <name>Mg(2+)</name>
        <dbReference type="ChEBI" id="CHEBI:18420"/>
    </ligand>
</feature>
<feature type="binding site" description="in other chain" evidence="1">
    <location>
        <position position="131"/>
    </location>
    <ligand>
        <name>IMP</name>
        <dbReference type="ChEBI" id="CHEBI:58053"/>
        <note>ligand shared between dimeric partners</note>
    </ligand>
</feature>
<feature type="binding site" evidence="1">
    <location>
        <position position="145"/>
    </location>
    <ligand>
        <name>IMP</name>
        <dbReference type="ChEBI" id="CHEBI:58053"/>
        <note>ligand shared between dimeric partners</note>
    </ligand>
</feature>
<feature type="binding site" description="in other chain" evidence="1">
    <location>
        <position position="226"/>
    </location>
    <ligand>
        <name>IMP</name>
        <dbReference type="ChEBI" id="CHEBI:58053"/>
        <note>ligand shared between dimeric partners</note>
    </ligand>
</feature>
<feature type="binding site" description="in other chain" evidence="1">
    <location>
        <position position="241"/>
    </location>
    <ligand>
        <name>IMP</name>
        <dbReference type="ChEBI" id="CHEBI:58053"/>
        <note>ligand shared between dimeric partners</note>
    </ligand>
</feature>
<feature type="binding site" evidence="1">
    <location>
        <begin position="305"/>
        <end position="311"/>
    </location>
    <ligand>
        <name>substrate</name>
    </ligand>
</feature>
<feature type="binding site" description="in other chain" evidence="1">
    <location>
        <position position="309"/>
    </location>
    <ligand>
        <name>IMP</name>
        <dbReference type="ChEBI" id="CHEBI:58053"/>
        <note>ligand shared between dimeric partners</note>
    </ligand>
</feature>
<feature type="binding site" evidence="1">
    <location>
        <position position="311"/>
    </location>
    <ligand>
        <name>GTP</name>
        <dbReference type="ChEBI" id="CHEBI:37565"/>
    </ligand>
</feature>
<feature type="binding site" evidence="1">
    <location>
        <begin position="337"/>
        <end position="339"/>
    </location>
    <ligand>
        <name>GTP</name>
        <dbReference type="ChEBI" id="CHEBI:37565"/>
    </ligand>
</feature>
<feature type="binding site" evidence="1">
    <location>
        <begin position="419"/>
        <end position="421"/>
    </location>
    <ligand>
        <name>GTP</name>
        <dbReference type="ChEBI" id="CHEBI:37565"/>
    </ligand>
</feature>
<dbReference type="EC" id="6.3.4.4" evidence="1"/>
<dbReference type="EMBL" id="CP000089">
    <property type="protein sequence ID" value="AAZ47704.1"/>
    <property type="molecule type" value="Genomic_DNA"/>
</dbReference>
<dbReference type="SMR" id="Q47BS7"/>
<dbReference type="STRING" id="159087.Daro_2974"/>
<dbReference type="KEGG" id="dar:Daro_2974"/>
<dbReference type="eggNOG" id="COG0104">
    <property type="taxonomic scope" value="Bacteria"/>
</dbReference>
<dbReference type="HOGENOM" id="CLU_029848_0_0_4"/>
<dbReference type="OrthoDB" id="9807553at2"/>
<dbReference type="UniPathway" id="UPA00075">
    <property type="reaction ID" value="UER00335"/>
</dbReference>
<dbReference type="GO" id="GO:0005737">
    <property type="term" value="C:cytoplasm"/>
    <property type="evidence" value="ECO:0007669"/>
    <property type="project" value="UniProtKB-SubCell"/>
</dbReference>
<dbReference type="GO" id="GO:0004019">
    <property type="term" value="F:adenylosuccinate synthase activity"/>
    <property type="evidence" value="ECO:0007669"/>
    <property type="project" value="UniProtKB-UniRule"/>
</dbReference>
<dbReference type="GO" id="GO:0005525">
    <property type="term" value="F:GTP binding"/>
    <property type="evidence" value="ECO:0007669"/>
    <property type="project" value="UniProtKB-UniRule"/>
</dbReference>
<dbReference type="GO" id="GO:0000287">
    <property type="term" value="F:magnesium ion binding"/>
    <property type="evidence" value="ECO:0007669"/>
    <property type="project" value="UniProtKB-UniRule"/>
</dbReference>
<dbReference type="GO" id="GO:0044208">
    <property type="term" value="P:'de novo' AMP biosynthetic process"/>
    <property type="evidence" value="ECO:0007669"/>
    <property type="project" value="UniProtKB-UniRule"/>
</dbReference>
<dbReference type="GO" id="GO:0046040">
    <property type="term" value="P:IMP metabolic process"/>
    <property type="evidence" value="ECO:0007669"/>
    <property type="project" value="TreeGrafter"/>
</dbReference>
<dbReference type="CDD" id="cd03108">
    <property type="entry name" value="AdSS"/>
    <property type="match status" value="1"/>
</dbReference>
<dbReference type="FunFam" id="1.10.300.10:FF:000001">
    <property type="entry name" value="Adenylosuccinate synthetase"/>
    <property type="match status" value="1"/>
</dbReference>
<dbReference type="FunFam" id="3.90.170.10:FF:000001">
    <property type="entry name" value="Adenylosuccinate synthetase"/>
    <property type="match status" value="1"/>
</dbReference>
<dbReference type="Gene3D" id="3.40.440.10">
    <property type="entry name" value="Adenylosuccinate Synthetase, subunit A, domain 1"/>
    <property type="match status" value="1"/>
</dbReference>
<dbReference type="Gene3D" id="1.10.300.10">
    <property type="entry name" value="Adenylosuccinate Synthetase, subunit A, domain 2"/>
    <property type="match status" value="1"/>
</dbReference>
<dbReference type="Gene3D" id="3.90.170.10">
    <property type="entry name" value="Adenylosuccinate Synthetase, subunit A, domain 3"/>
    <property type="match status" value="1"/>
</dbReference>
<dbReference type="HAMAP" id="MF_00011">
    <property type="entry name" value="Adenylosucc_synth"/>
    <property type="match status" value="1"/>
</dbReference>
<dbReference type="InterPro" id="IPR018220">
    <property type="entry name" value="Adenylosuccin_syn_GTP-bd"/>
</dbReference>
<dbReference type="InterPro" id="IPR033128">
    <property type="entry name" value="Adenylosuccin_syn_Lys_AS"/>
</dbReference>
<dbReference type="InterPro" id="IPR042109">
    <property type="entry name" value="Adenylosuccinate_synth_dom1"/>
</dbReference>
<dbReference type="InterPro" id="IPR042110">
    <property type="entry name" value="Adenylosuccinate_synth_dom2"/>
</dbReference>
<dbReference type="InterPro" id="IPR042111">
    <property type="entry name" value="Adenylosuccinate_synth_dom3"/>
</dbReference>
<dbReference type="InterPro" id="IPR001114">
    <property type="entry name" value="Adenylosuccinate_synthetase"/>
</dbReference>
<dbReference type="InterPro" id="IPR027417">
    <property type="entry name" value="P-loop_NTPase"/>
</dbReference>
<dbReference type="NCBIfam" id="NF002223">
    <property type="entry name" value="PRK01117.1"/>
    <property type="match status" value="1"/>
</dbReference>
<dbReference type="NCBIfam" id="TIGR00184">
    <property type="entry name" value="purA"/>
    <property type="match status" value="1"/>
</dbReference>
<dbReference type="PANTHER" id="PTHR11846">
    <property type="entry name" value="ADENYLOSUCCINATE SYNTHETASE"/>
    <property type="match status" value="1"/>
</dbReference>
<dbReference type="PANTHER" id="PTHR11846:SF0">
    <property type="entry name" value="ADENYLOSUCCINATE SYNTHETASE"/>
    <property type="match status" value="1"/>
</dbReference>
<dbReference type="Pfam" id="PF00709">
    <property type="entry name" value="Adenylsucc_synt"/>
    <property type="match status" value="1"/>
</dbReference>
<dbReference type="SMART" id="SM00788">
    <property type="entry name" value="Adenylsucc_synt"/>
    <property type="match status" value="1"/>
</dbReference>
<dbReference type="SUPFAM" id="SSF52540">
    <property type="entry name" value="P-loop containing nucleoside triphosphate hydrolases"/>
    <property type="match status" value="1"/>
</dbReference>
<dbReference type="PROSITE" id="PS01266">
    <property type="entry name" value="ADENYLOSUCCIN_SYN_1"/>
    <property type="match status" value="1"/>
</dbReference>
<dbReference type="PROSITE" id="PS00513">
    <property type="entry name" value="ADENYLOSUCCIN_SYN_2"/>
    <property type="match status" value="1"/>
</dbReference>
<proteinExistence type="inferred from homology"/>
<evidence type="ECO:0000255" key="1">
    <source>
        <dbReference type="HAMAP-Rule" id="MF_00011"/>
    </source>
</evidence>
<gene>
    <name evidence="1" type="primary">purA</name>
    <name type="ordered locus">Daro_2974</name>
</gene>
<sequence>MAKNVIVVGTQWGDEGKGKIVDWLTDHAKGVVRFQGGHNAGHTLVVGEQVYKLNLVPSGIVRDGVECYIGNGVVLDIHHLLSEIAELEKGGIDVRSRLKISPGCPLILPYHSAIDKARECAKSEDKKIGTTGKGIGPTYEDKVSRRGLRVYDLFNPERFAEKLKEVLEYHNFVLTQYFKAPAVDFQTVYDQAMADAEQIKPLVTDVSAALYAANKAGSNLLFEGAQGTLLDIDHGTYPFVTSSNCVAGQASAGAGIGPGMLHYVLGITKAYCTRVGGGPFPSELDIETEGAPGYQMSQVGREFGTVTGRKRRCGWFDAAALRRSGRINGLTGLCITKLDVLDGLKELNICTGYKLDGKIIDLLPIGADEVVRCEPIYETMPGWTDTTFGVKRWEDLPVNAQSYLNRLEVLCEVPIAIVSTGPERDETILKQHPFK</sequence>
<reference key="1">
    <citation type="journal article" date="2009" name="BMC Genomics">
        <title>Metabolic analysis of the soil microbe Dechloromonas aromatica str. RCB: indications of a surprisingly complex life-style and cryptic anaerobic pathways for aromatic degradation.</title>
        <authorList>
            <person name="Salinero K.K."/>
            <person name="Keller K."/>
            <person name="Feil W.S."/>
            <person name="Feil H."/>
            <person name="Trong S."/>
            <person name="Di Bartolo G."/>
            <person name="Lapidus A."/>
        </authorList>
    </citation>
    <scope>NUCLEOTIDE SEQUENCE [LARGE SCALE GENOMIC DNA]</scope>
    <source>
        <strain>RCB</strain>
    </source>
</reference>
<name>PURA_DECAR</name>
<protein>
    <recommendedName>
        <fullName evidence="1">Adenylosuccinate synthetase</fullName>
        <shortName evidence="1">AMPSase</shortName>
        <shortName evidence="1">AdSS</shortName>
        <ecNumber evidence="1">6.3.4.4</ecNumber>
    </recommendedName>
    <alternativeName>
        <fullName evidence="1">IMP--aspartate ligase</fullName>
    </alternativeName>
</protein>